<proteinExistence type="inferred from homology"/>
<feature type="chain" id="PRO_0000296494" description="Large ribosomal subunit protein bL32B">
    <location>
        <begin position="1"/>
        <end position="57"/>
    </location>
</feature>
<name>RL322_LISW6</name>
<protein>
    <recommendedName>
        <fullName evidence="1">Large ribosomal subunit protein bL32B</fullName>
    </recommendedName>
    <alternativeName>
        <fullName evidence="2">50S ribosomal protein L32 2</fullName>
    </alternativeName>
</protein>
<organism>
    <name type="scientific">Listeria welshimeri serovar 6b (strain ATCC 35897 / DSM 20650 / CCUG 15529 / CIP 8149 / NCTC 11857 / SLCC 5334 / V8)</name>
    <dbReference type="NCBI Taxonomy" id="386043"/>
    <lineage>
        <taxon>Bacteria</taxon>
        <taxon>Bacillati</taxon>
        <taxon>Bacillota</taxon>
        <taxon>Bacilli</taxon>
        <taxon>Bacillales</taxon>
        <taxon>Listeriaceae</taxon>
        <taxon>Listeria</taxon>
    </lineage>
</organism>
<evidence type="ECO:0000255" key="1">
    <source>
        <dbReference type="HAMAP-Rule" id="MF_00340"/>
    </source>
</evidence>
<evidence type="ECO:0000305" key="2"/>
<gene>
    <name evidence="1" type="primary">rpmF2</name>
    <name type="ordered locus">lwe2061</name>
</gene>
<comment type="similarity">
    <text evidence="1">Belongs to the bacterial ribosomal protein bL32 family.</text>
</comment>
<dbReference type="EMBL" id="AM263198">
    <property type="protein sequence ID" value="CAK21479.1"/>
    <property type="molecule type" value="Genomic_DNA"/>
</dbReference>
<dbReference type="SMR" id="A0AKE7"/>
<dbReference type="STRING" id="386043.lwe2061"/>
<dbReference type="KEGG" id="lwe:lwe2061"/>
<dbReference type="eggNOG" id="COG0333">
    <property type="taxonomic scope" value="Bacteria"/>
</dbReference>
<dbReference type="HOGENOM" id="CLU_129084_1_3_9"/>
<dbReference type="OrthoDB" id="9812874at2"/>
<dbReference type="Proteomes" id="UP000000779">
    <property type="component" value="Chromosome"/>
</dbReference>
<dbReference type="GO" id="GO:0015934">
    <property type="term" value="C:large ribosomal subunit"/>
    <property type="evidence" value="ECO:0007669"/>
    <property type="project" value="InterPro"/>
</dbReference>
<dbReference type="GO" id="GO:0003735">
    <property type="term" value="F:structural constituent of ribosome"/>
    <property type="evidence" value="ECO:0007669"/>
    <property type="project" value="InterPro"/>
</dbReference>
<dbReference type="GO" id="GO:0006412">
    <property type="term" value="P:translation"/>
    <property type="evidence" value="ECO:0007669"/>
    <property type="project" value="UniProtKB-UniRule"/>
</dbReference>
<dbReference type="HAMAP" id="MF_00340">
    <property type="entry name" value="Ribosomal_bL32"/>
    <property type="match status" value="1"/>
</dbReference>
<dbReference type="InterPro" id="IPR002677">
    <property type="entry name" value="Ribosomal_bL32"/>
</dbReference>
<dbReference type="InterPro" id="IPR044957">
    <property type="entry name" value="Ribosomal_bL32_bact"/>
</dbReference>
<dbReference type="InterPro" id="IPR011332">
    <property type="entry name" value="Ribosomal_zn-bd"/>
</dbReference>
<dbReference type="NCBIfam" id="TIGR01031">
    <property type="entry name" value="rpmF_bact"/>
    <property type="match status" value="1"/>
</dbReference>
<dbReference type="PANTHER" id="PTHR35534">
    <property type="entry name" value="50S RIBOSOMAL PROTEIN L32"/>
    <property type="match status" value="1"/>
</dbReference>
<dbReference type="PANTHER" id="PTHR35534:SF2">
    <property type="entry name" value="LARGE RIBOSOMAL SUBUNIT PROTEIN BL32"/>
    <property type="match status" value="1"/>
</dbReference>
<dbReference type="Pfam" id="PF01783">
    <property type="entry name" value="Ribosomal_L32p"/>
    <property type="match status" value="1"/>
</dbReference>
<dbReference type="SUPFAM" id="SSF57829">
    <property type="entry name" value="Zn-binding ribosomal proteins"/>
    <property type="match status" value="1"/>
</dbReference>
<accession>A0AKE7</accession>
<keyword id="KW-0687">Ribonucleoprotein</keyword>
<keyword id="KW-0689">Ribosomal protein</keyword>
<reference key="1">
    <citation type="journal article" date="2006" name="J. Bacteriol.">
        <title>Whole-genome sequence of Listeria welshimeri reveals common steps in genome reduction with Listeria innocua as compared to Listeria monocytogenes.</title>
        <authorList>
            <person name="Hain T."/>
            <person name="Steinweg C."/>
            <person name="Kuenne C.T."/>
            <person name="Billion A."/>
            <person name="Ghai R."/>
            <person name="Chatterjee S.S."/>
            <person name="Domann E."/>
            <person name="Kaerst U."/>
            <person name="Goesmann A."/>
            <person name="Bekel T."/>
            <person name="Bartels D."/>
            <person name="Kaiser O."/>
            <person name="Meyer F."/>
            <person name="Puehler A."/>
            <person name="Weisshaar B."/>
            <person name="Wehland J."/>
            <person name="Liang C."/>
            <person name="Dandekar T."/>
            <person name="Lampidis R."/>
            <person name="Kreft J."/>
            <person name="Goebel W."/>
            <person name="Chakraborty T."/>
        </authorList>
    </citation>
    <scope>NUCLEOTIDE SEQUENCE [LARGE SCALE GENOMIC DNA]</scope>
    <source>
        <strain>ATCC 35897 / DSM 20650 / CCUG 15529 / CIP 8149 / NCTC 11857 / SLCC 5334 / V8</strain>
    </source>
</reference>
<sequence length="57" mass="6534">MAVPFRRTSKAKKRKRRTHVKLQLPGMNECSNCGEYRLSHHVCPECGQYDGKEVANS</sequence>